<organism>
    <name type="scientific">Pyrococcus horikoshii (strain ATCC 700860 / DSM 12428 / JCM 9974 / NBRC 100139 / OT-3)</name>
    <dbReference type="NCBI Taxonomy" id="70601"/>
    <lineage>
        <taxon>Archaea</taxon>
        <taxon>Methanobacteriati</taxon>
        <taxon>Methanobacteriota</taxon>
        <taxon>Thermococci</taxon>
        <taxon>Thermococcales</taxon>
        <taxon>Thermococcaceae</taxon>
        <taxon>Pyrococcus</taxon>
    </lineage>
</organism>
<name>ATGT_PYRHO</name>
<comment type="function">
    <text evidence="1">Exchanges the guanine residue with 7-cyano-7-deazaguanine (preQ0) at position 15 in the dihydrouridine loop (D-loop) of archaeal tRNAs.</text>
</comment>
<comment type="catalytic activity">
    <reaction>
        <text>guanosine(15) in tRNA + 7-cyano-7-deazaguanine = 7-cyano-7-carbaguanosine(15) in tRNA + guanine</text>
        <dbReference type="Rhea" id="RHEA:43164"/>
        <dbReference type="Rhea" id="RHEA-COMP:10371"/>
        <dbReference type="Rhea" id="RHEA-COMP:10372"/>
        <dbReference type="ChEBI" id="CHEBI:16235"/>
        <dbReference type="ChEBI" id="CHEBI:45075"/>
        <dbReference type="ChEBI" id="CHEBI:74269"/>
        <dbReference type="ChEBI" id="CHEBI:82850"/>
        <dbReference type="EC" id="2.4.2.48"/>
    </reaction>
</comment>
<comment type="cofactor">
    <cofactor evidence="1 2">
        <name>Zn(2+)</name>
        <dbReference type="ChEBI" id="CHEBI:29105"/>
    </cofactor>
    <text evidence="1 2">Binds 1 zinc ion per subunit.</text>
</comment>
<comment type="pathway">
    <text>tRNA modification; archaeosine-tRNA biosynthesis.</text>
</comment>
<comment type="subunit">
    <text evidence="1 2">Homodimer.</text>
</comment>
<comment type="similarity">
    <text evidence="3">Belongs to the archaeosine tRNA-ribosyltransferase family.</text>
</comment>
<proteinExistence type="evidence at protein level"/>
<dbReference type="EC" id="2.4.2.48"/>
<dbReference type="EMBL" id="BA000001">
    <property type="protein sequence ID" value="BAA30215.1"/>
    <property type="molecule type" value="Genomic_DNA"/>
</dbReference>
<dbReference type="PIR" id="E71052">
    <property type="entry name" value="E71052"/>
</dbReference>
<dbReference type="RefSeq" id="WP_010885200.1">
    <property type="nucleotide sequence ID" value="NC_000961.1"/>
</dbReference>
<dbReference type="PDB" id="1IQ8">
    <property type="method" value="X-ray"/>
    <property type="resolution" value="2.20 A"/>
    <property type="chains" value="A/B=1-582"/>
</dbReference>
<dbReference type="PDB" id="1IT7">
    <property type="method" value="X-ray"/>
    <property type="resolution" value="2.30 A"/>
    <property type="chains" value="A/B=1-582"/>
</dbReference>
<dbReference type="PDB" id="1IT8">
    <property type="method" value="X-ray"/>
    <property type="resolution" value="2.50 A"/>
    <property type="chains" value="A/B=1-582"/>
</dbReference>
<dbReference type="PDB" id="1J2B">
    <property type="method" value="X-ray"/>
    <property type="resolution" value="3.30 A"/>
    <property type="chains" value="A/B=1-582"/>
</dbReference>
<dbReference type="PDBsum" id="1IQ8"/>
<dbReference type="PDBsum" id="1IT7"/>
<dbReference type="PDBsum" id="1IT8"/>
<dbReference type="PDBsum" id="1J2B"/>
<dbReference type="SMR" id="O58843"/>
<dbReference type="STRING" id="70601.gene:9378075"/>
<dbReference type="EnsemblBacteria" id="BAA30215">
    <property type="protein sequence ID" value="BAA30215"/>
    <property type="gene ID" value="BAA30215"/>
</dbReference>
<dbReference type="GeneID" id="1443435"/>
<dbReference type="KEGG" id="pho:PH1116"/>
<dbReference type="eggNOG" id="arCOG00989">
    <property type="taxonomic scope" value="Archaea"/>
</dbReference>
<dbReference type="eggNOG" id="arCOG00991">
    <property type="taxonomic scope" value="Archaea"/>
</dbReference>
<dbReference type="OrthoDB" id="6871at2157"/>
<dbReference type="BRENDA" id="2.4.2.48">
    <property type="organism ID" value="5244"/>
</dbReference>
<dbReference type="UniPathway" id="UPA00393"/>
<dbReference type="EvolutionaryTrace" id="O58843"/>
<dbReference type="Proteomes" id="UP000000752">
    <property type="component" value="Chromosome"/>
</dbReference>
<dbReference type="GO" id="GO:0005737">
    <property type="term" value="C:cytoplasm"/>
    <property type="evidence" value="ECO:0007669"/>
    <property type="project" value="TreeGrafter"/>
</dbReference>
<dbReference type="GO" id="GO:0016763">
    <property type="term" value="F:pentosyltransferase activity"/>
    <property type="evidence" value="ECO:0007669"/>
    <property type="project" value="UniProtKB-UniRule"/>
</dbReference>
<dbReference type="GO" id="GO:0003723">
    <property type="term" value="F:RNA binding"/>
    <property type="evidence" value="ECO:0007669"/>
    <property type="project" value="InterPro"/>
</dbReference>
<dbReference type="GO" id="GO:0008270">
    <property type="term" value="F:zinc ion binding"/>
    <property type="evidence" value="ECO:0007669"/>
    <property type="project" value="UniProtKB-UniRule"/>
</dbReference>
<dbReference type="GO" id="GO:0002099">
    <property type="term" value="P:tRNA wobble guanine modification"/>
    <property type="evidence" value="ECO:0007669"/>
    <property type="project" value="TreeGrafter"/>
</dbReference>
<dbReference type="CDD" id="cd21149">
    <property type="entry name" value="PUA_archaeosine_TGT"/>
    <property type="match status" value="1"/>
</dbReference>
<dbReference type="Gene3D" id="3.90.1020.10">
    <property type="entry name" value="ArcTGT, C1 domain"/>
    <property type="match status" value="1"/>
</dbReference>
<dbReference type="Gene3D" id="3.10.450.90">
    <property type="entry name" value="ArcTGT, C2 domain"/>
    <property type="match status" value="1"/>
</dbReference>
<dbReference type="Gene3D" id="2.30.130.10">
    <property type="entry name" value="PUA domain"/>
    <property type="match status" value="1"/>
</dbReference>
<dbReference type="Gene3D" id="3.20.20.105">
    <property type="entry name" value="Queuine tRNA-ribosyltransferase-like"/>
    <property type="match status" value="1"/>
</dbReference>
<dbReference type="HAMAP" id="MF_01634">
    <property type="entry name" value="TgtA_arch"/>
    <property type="match status" value="1"/>
</dbReference>
<dbReference type="InterPro" id="IPR050076">
    <property type="entry name" value="ArchSynthase1/Queuine_TRR"/>
</dbReference>
<dbReference type="InterPro" id="IPR038370">
    <property type="entry name" value="ArcTGT_C1_sf"/>
</dbReference>
<dbReference type="InterPro" id="IPR002478">
    <property type="entry name" value="PUA"/>
</dbReference>
<dbReference type="InterPro" id="IPR015947">
    <property type="entry name" value="PUA-like_sf"/>
</dbReference>
<dbReference type="InterPro" id="IPR036974">
    <property type="entry name" value="PUA_sf"/>
</dbReference>
<dbReference type="InterPro" id="IPR036511">
    <property type="entry name" value="TGT-like_sf"/>
</dbReference>
<dbReference type="InterPro" id="IPR032729">
    <property type="entry name" value="TGT_C1"/>
</dbReference>
<dbReference type="InterPro" id="IPR029402">
    <property type="entry name" value="TGT_C2"/>
</dbReference>
<dbReference type="InterPro" id="IPR038250">
    <property type="entry name" value="TGT_C2_sf"/>
</dbReference>
<dbReference type="InterPro" id="IPR004804">
    <property type="entry name" value="TgtA"/>
</dbReference>
<dbReference type="InterPro" id="IPR002616">
    <property type="entry name" value="tRNA_ribo_trans-like"/>
</dbReference>
<dbReference type="InterPro" id="IPR004521">
    <property type="entry name" value="Uncharacterised_CHP00451"/>
</dbReference>
<dbReference type="NCBIfam" id="TIGR00432">
    <property type="entry name" value="arcsn_tRNA_tgt"/>
    <property type="match status" value="1"/>
</dbReference>
<dbReference type="NCBIfam" id="TIGR00449">
    <property type="entry name" value="tgt_general"/>
    <property type="match status" value="1"/>
</dbReference>
<dbReference type="NCBIfam" id="TIGR00451">
    <property type="entry name" value="unchar_dom_2"/>
    <property type="match status" value="1"/>
</dbReference>
<dbReference type="PANTHER" id="PTHR46499">
    <property type="entry name" value="QUEUINE TRNA-RIBOSYLTRANSFERASE"/>
    <property type="match status" value="1"/>
</dbReference>
<dbReference type="PANTHER" id="PTHR46499:SF1">
    <property type="entry name" value="QUEUINE TRNA-RIBOSYLTRANSFERASE"/>
    <property type="match status" value="1"/>
</dbReference>
<dbReference type="Pfam" id="PF01472">
    <property type="entry name" value="PUA"/>
    <property type="match status" value="1"/>
</dbReference>
<dbReference type="Pfam" id="PF01702">
    <property type="entry name" value="TGT"/>
    <property type="match status" value="1"/>
</dbReference>
<dbReference type="Pfam" id="PF14809">
    <property type="entry name" value="TGT_C1"/>
    <property type="match status" value="1"/>
</dbReference>
<dbReference type="Pfam" id="PF14810">
    <property type="entry name" value="TGT_C2"/>
    <property type="match status" value="1"/>
</dbReference>
<dbReference type="SMART" id="SM00359">
    <property type="entry name" value="PUA"/>
    <property type="match status" value="1"/>
</dbReference>
<dbReference type="SUPFAM" id="SSF88802">
    <property type="entry name" value="Pre-PUA domain"/>
    <property type="match status" value="1"/>
</dbReference>
<dbReference type="SUPFAM" id="SSF88697">
    <property type="entry name" value="PUA domain-like"/>
    <property type="match status" value="1"/>
</dbReference>
<dbReference type="SUPFAM" id="SSF51713">
    <property type="entry name" value="tRNA-guanine transglycosylase"/>
    <property type="match status" value="1"/>
</dbReference>
<dbReference type="PROSITE" id="PS50890">
    <property type="entry name" value="PUA"/>
    <property type="match status" value="1"/>
</dbReference>
<protein>
    <recommendedName>
        <fullName>tRNA-guanine(15) transglycosylase</fullName>
        <ecNumber>2.4.2.48</ecNumber>
    </recommendedName>
    <alternativeName>
        <fullName>7-cyano-7-deazaguanine tRNA-ribosyltransferase</fullName>
    </alternativeName>
    <alternativeName>
        <fullName>Archaeal tRNA-guanine transglycosylase</fullName>
    </alternativeName>
</protein>
<gene>
    <name type="primary">tgtA</name>
    <name type="ordered locus">PH1116</name>
</gene>
<feature type="chain" id="PRO_0000247617" description="tRNA-guanine(15) transglycosylase">
    <location>
        <begin position="1"/>
        <end position="582"/>
    </location>
</feature>
<feature type="domain" description="PUA">
    <location>
        <begin position="507"/>
        <end position="582"/>
    </location>
</feature>
<feature type="active site" description="Nucleophile" evidence="1">
    <location>
        <position position="95"/>
    </location>
</feature>
<feature type="binding site" evidence="1">
    <location>
        <position position="130"/>
    </location>
    <ligand>
        <name>substrate</name>
    </ligand>
</feature>
<feature type="binding site" evidence="1">
    <location>
        <position position="196"/>
    </location>
    <ligand>
        <name>substrate</name>
    </ligand>
</feature>
<feature type="binding site" evidence="1 2">
    <location>
        <position position="279"/>
    </location>
    <ligand>
        <name>Zn(2+)</name>
        <dbReference type="ChEBI" id="CHEBI:29105"/>
    </ligand>
</feature>
<feature type="binding site" evidence="1 2">
    <location>
        <position position="281"/>
    </location>
    <ligand>
        <name>Zn(2+)</name>
        <dbReference type="ChEBI" id="CHEBI:29105"/>
    </ligand>
</feature>
<feature type="binding site" evidence="1 2">
    <location>
        <position position="284"/>
    </location>
    <ligand>
        <name>Zn(2+)</name>
        <dbReference type="ChEBI" id="CHEBI:29105"/>
    </ligand>
</feature>
<feature type="mutagenesis site" description="Abolishes the transferase activity." evidence="1">
    <original>D</original>
    <variation>A</variation>
    <location>
        <position position="95"/>
    </location>
</feature>
<feature type="mutagenesis site" description="Weak decrease in transferase activity." evidence="1">
    <original>S</original>
    <variation>A</variation>
    <location>
        <position position="96"/>
    </location>
</feature>
<feature type="strand" evidence="4">
    <location>
        <begin position="8"/>
        <end position="16"/>
    </location>
</feature>
<feature type="strand" evidence="4">
    <location>
        <begin position="19"/>
        <end position="26"/>
    </location>
</feature>
<feature type="strand" evidence="4">
    <location>
        <begin position="29"/>
        <end position="39"/>
    </location>
</feature>
<feature type="strand" evidence="4">
    <location>
        <begin position="42"/>
        <end position="44"/>
    </location>
</feature>
<feature type="helix" evidence="4">
    <location>
        <begin position="49"/>
        <end position="54"/>
    </location>
</feature>
<feature type="strand" evidence="4">
    <location>
        <begin position="59"/>
        <end position="63"/>
    </location>
</feature>
<feature type="helix" evidence="4">
    <location>
        <begin position="64"/>
        <end position="69"/>
    </location>
</feature>
<feature type="helix" evidence="4">
    <location>
        <begin position="71"/>
        <end position="86"/>
    </location>
</feature>
<feature type="strand" evidence="4">
    <location>
        <begin position="90"/>
        <end position="95"/>
    </location>
</feature>
<feature type="helix" evidence="4">
    <location>
        <begin position="100"/>
        <end position="103"/>
    </location>
</feature>
<feature type="helix" evidence="4">
    <location>
        <begin position="111"/>
        <end position="120"/>
    </location>
</feature>
<feature type="strand" evidence="4">
    <location>
        <begin position="124"/>
        <end position="126"/>
    </location>
</feature>
<feature type="helix" evidence="4">
    <location>
        <begin position="139"/>
        <end position="159"/>
    </location>
</feature>
<feature type="helix" evidence="4">
    <location>
        <begin position="174"/>
        <end position="186"/>
    </location>
</feature>
<feature type="strand" evidence="4">
    <location>
        <begin position="190"/>
        <end position="194"/>
    </location>
</feature>
<feature type="helix" evidence="4">
    <location>
        <begin position="198"/>
        <end position="202"/>
    </location>
</feature>
<feature type="helix" evidence="4">
    <location>
        <begin position="206"/>
        <end position="219"/>
    </location>
</feature>
<feature type="strand" evidence="4">
    <location>
        <begin position="226"/>
        <end position="228"/>
    </location>
</feature>
<feature type="helix" evidence="4">
    <location>
        <begin position="234"/>
        <end position="236"/>
    </location>
</feature>
<feature type="helix" evidence="4">
    <location>
        <begin position="237"/>
        <end position="242"/>
    </location>
</feature>
<feature type="strand" evidence="4">
    <location>
        <begin position="247"/>
        <end position="251"/>
    </location>
</feature>
<feature type="helix" evidence="4">
    <location>
        <begin position="252"/>
        <end position="258"/>
    </location>
</feature>
<feature type="strand" evidence="4">
    <location>
        <begin position="261"/>
        <end position="264"/>
    </location>
</feature>
<feature type="strand" evidence="4">
    <location>
        <begin position="267"/>
        <end position="270"/>
    </location>
</feature>
<feature type="helix" evidence="4">
    <location>
        <begin position="271"/>
        <end position="273"/>
    </location>
</feature>
<feature type="turn" evidence="4">
    <location>
        <begin position="282"/>
        <end position="286"/>
    </location>
</feature>
<feature type="helix" evidence="4">
    <location>
        <begin position="289"/>
        <end position="292"/>
    </location>
</feature>
<feature type="helix" evidence="4">
    <location>
        <begin position="297"/>
        <end position="325"/>
    </location>
</feature>
<feature type="helix" evidence="4">
    <location>
        <begin position="328"/>
        <end position="336"/>
    </location>
</feature>
<feature type="helix" evidence="4">
    <location>
        <begin position="340"/>
        <end position="351"/>
    </location>
</feature>
<feature type="helix" evidence="4">
    <location>
        <begin position="353"/>
        <end position="359"/>
    </location>
</feature>
<feature type="helix" evidence="4">
    <location>
        <begin position="374"/>
        <end position="377"/>
    </location>
</feature>
<feature type="helix" evidence="4">
    <location>
        <begin position="379"/>
        <end position="395"/>
    </location>
</feature>
<feature type="strand" evidence="4">
    <location>
        <begin position="398"/>
        <end position="401"/>
    </location>
</feature>
<feature type="turn" evidence="4">
    <location>
        <begin position="402"/>
        <end position="404"/>
    </location>
</feature>
<feature type="strand" evidence="4">
    <location>
        <begin position="405"/>
        <end position="408"/>
    </location>
</feature>
<feature type="helix" evidence="4">
    <location>
        <begin position="409"/>
        <end position="411"/>
    </location>
</feature>
<feature type="turn" evidence="4">
    <location>
        <begin position="415"/>
        <end position="417"/>
    </location>
</feature>
<feature type="strand" evidence="4">
    <location>
        <begin position="418"/>
        <end position="421"/>
    </location>
</feature>
<feature type="turn" evidence="4">
    <location>
        <begin position="433"/>
        <end position="435"/>
    </location>
</feature>
<feature type="helix" evidence="4">
    <location>
        <begin position="436"/>
        <end position="448"/>
    </location>
</feature>
<feature type="helix" evidence="4">
    <location>
        <begin position="452"/>
        <end position="455"/>
    </location>
</feature>
<feature type="turn" evidence="4">
    <location>
        <begin position="456"/>
        <end position="458"/>
    </location>
</feature>
<feature type="strand" evidence="4">
    <location>
        <begin position="460"/>
        <end position="463"/>
    </location>
</feature>
<feature type="strand" evidence="4">
    <location>
        <begin position="465"/>
        <end position="467"/>
    </location>
</feature>
<feature type="strand" evidence="4">
    <location>
        <begin position="469"/>
        <end position="473"/>
    </location>
</feature>
<feature type="strand" evidence="4">
    <location>
        <begin position="475"/>
        <end position="482"/>
    </location>
</feature>
<feature type="turn" evidence="4">
    <location>
        <begin position="484"/>
        <end position="486"/>
    </location>
</feature>
<feature type="strand" evidence="4">
    <location>
        <begin position="489"/>
        <end position="491"/>
    </location>
</feature>
<feature type="helix" evidence="4">
    <location>
        <begin position="493"/>
        <end position="502"/>
    </location>
</feature>
<feature type="turn" evidence="4">
    <location>
        <begin position="505"/>
        <end position="508"/>
    </location>
</feature>
<feature type="strand" evidence="4">
    <location>
        <begin position="509"/>
        <end position="512"/>
    </location>
</feature>
<feature type="turn" evidence="4">
    <location>
        <begin position="514"/>
        <end position="516"/>
    </location>
</feature>
<feature type="helix" evidence="4">
    <location>
        <begin position="517"/>
        <end position="521"/>
    </location>
</feature>
<feature type="helix" evidence="4">
    <location>
        <begin position="528"/>
        <end position="530"/>
    </location>
</feature>
<feature type="strand" evidence="4">
    <location>
        <begin position="531"/>
        <end position="534"/>
    </location>
</feature>
<feature type="strand" evidence="4">
    <location>
        <begin position="543"/>
        <end position="547"/>
    </location>
</feature>
<feature type="strand" evidence="4">
    <location>
        <begin position="553"/>
        <end position="561"/>
    </location>
</feature>
<feature type="helix" evidence="4">
    <location>
        <begin position="563"/>
        <end position="568"/>
    </location>
</feature>
<feature type="strand" evidence="4">
    <location>
        <begin position="571"/>
        <end position="580"/>
    </location>
</feature>
<evidence type="ECO:0000269" key="1">
    <source>
    </source>
</evidence>
<evidence type="ECO:0000269" key="2">
    <source>
    </source>
</evidence>
<evidence type="ECO:0000305" key="3"/>
<evidence type="ECO:0007829" key="4">
    <source>
        <dbReference type="PDB" id="1IQ8"/>
    </source>
</evidence>
<sequence length="582" mass="66596">MSRGDKMLKFEIKARDGAGRIGKLEVNGKKIETPAIMPVVNPKQMVVEPKELEKMGFEIIITNSYIIYKDEELRRKALELGIHRMLDYNGIIEVDSGSFQLMKYGSIEVSNREIIEFQHRIGVDIGTFLDIPTPPDAPREQAVKELEITLSRAREAEEIKEIPMNATIQGSTYTDLRRYAARRLSSMNFEIHPIGGVVPLLESYRFRDVVDIVISSKMALRPDRPVHLFGAGHPIVFALAVAMGVDLFDSASYALYAKDDRYMTPEGTKRLDELDYFPCSCPVCSKYTPQELREMPKEERTRLLALHNLWVIKEEIKRVKQAIKEGELWRLVDERARSHPKLYSAYKRLLEHYTFLEEFEPITKKSALFKISNESLRWPVVRRAKERAKSINERFGELVEHPIFGRVSRYLSLTYPFAQSEAEDDFKIEKPTKEDAIKYVMAIAEYQFGEGASRAFDDAKVELSKTGMPRQVKVNGKRLATVRADDGLLTLGIEGAKRLHRVLPYPRMRVVVNKEAEPFARKGKDVFAKFVIFADPGIRPYDEVLVVNENDELLATGQALLSGREMIVFQYGRAVKVRKGVE</sequence>
<accession>O58843</accession>
<reference key="1">
    <citation type="journal article" date="1998" name="DNA Res.">
        <title>Complete sequence and gene organization of the genome of a hyper-thermophilic archaebacterium, Pyrococcus horikoshii OT3.</title>
        <authorList>
            <person name="Kawarabayasi Y."/>
            <person name="Sawada M."/>
            <person name="Horikawa H."/>
            <person name="Haikawa Y."/>
            <person name="Hino Y."/>
            <person name="Yamamoto S."/>
            <person name="Sekine M."/>
            <person name="Baba S."/>
            <person name="Kosugi H."/>
            <person name="Hosoyama A."/>
            <person name="Nagai Y."/>
            <person name="Sakai M."/>
            <person name="Ogura K."/>
            <person name="Otsuka R."/>
            <person name="Nakazawa H."/>
            <person name="Takamiya M."/>
            <person name="Ohfuku Y."/>
            <person name="Funahashi T."/>
            <person name="Tanaka T."/>
            <person name="Kudoh Y."/>
            <person name="Yamazaki J."/>
            <person name="Kushida N."/>
            <person name="Oguchi A."/>
            <person name="Aoki K."/>
            <person name="Yoshizawa T."/>
            <person name="Nakamura Y."/>
            <person name="Robb F.T."/>
            <person name="Horikoshi K."/>
            <person name="Masuchi Y."/>
            <person name="Shizuya H."/>
            <person name="Kikuchi H."/>
        </authorList>
    </citation>
    <scope>NUCLEOTIDE SEQUENCE [LARGE SCALE GENOMIC DNA]</scope>
    <source>
        <strain>ATCC 700860 / DSM 12428 / JCM 9974 / NBRC 100139 / OT-3</strain>
    </source>
</reference>
<reference key="2">
    <citation type="journal article" date="2002" name="J. Mol. Biol.">
        <title>Crystal structure of archaeosine tRNA-guanine transglycosylase.</title>
        <authorList>
            <person name="Ishitani R."/>
            <person name="Nureki O."/>
            <person name="Fukai S."/>
            <person name="Kijimoto T."/>
            <person name="Nameki N."/>
            <person name="Watanabe M."/>
            <person name="Kondo H."/>
            <person name="Sekine M."/>
            <person name="Okada N."/>
            <person name="Nishimura S."/>
            <person name="Yokoyama S."/>
        </authorList>
    </citation>
    <scope>X-RAY CRYSTALLOGRAPHY (2.2 ANGSTROMS) IN COMPLEX WITH SUBSTRATE ANALOG AND ZINC ION</scope>
    <scope>FUNCTION</scope>
    <scope>COFACTOR</scope>
    <scope>SUBUNIT</scope>
    <scope>MUTAGENESIS OF ASP-95 AND SER-96</scope>
    <scope>ACTIVE SITE</scope>
</reference>
<reference key="3">
    <citation type="journal article" date="2003" name="Cell">
        <title>Alternative tertiary structure of tRNA for recognition by a posttranscriptional modification enzyme.</title>
        <authorList>
            <person name="Ishitani R."/>
            <person name="Nureki O."/>
            <person name="Nameki N."/>
            <person name="Okada N."/>
            <person name="Nishimura S."/>
            <person name="Yokoyama S."/>
        </authorList>
    </citation>
    <scope>X-RAY CRYSTALLOGRAPHY (3.3 ANGSTROMS) IN COMPLEX WITH ZINC ION</scope>
    <scope>COFACTOR</scope>
    <scope>SUBUNIT</scope>
</reference>
<keyword id="KW-0002">3D-structure</keyword>
<keyword id="KW-0328">Glycosyltransferase</keyword>
<keyword id="KW-0479">Metal-binding</keyword>
<keyword id="KW-0808">Transferase</keyword>
<keyword id="KW-0819">tRNA processing</keyword>
<keyword id="KW-0862">Zinc</keyword>